<comment type="function">
    <text evidence="1">Mnh complex is a Na(+)/H(+) antiporter involved in Na(+) excretion.</text>
</comment>
<comment type="subunit">
    <text evidence="1">May form a heterooligomeric complex that consists of seven subunits: mnhA1, mnhB1, mnhC1, mnhD1, mnhE1, mnhF1 and mnhG1.</text>
</comment>
<comment type="subcellular location">
    <subcellularLocation>
        <location evidence="3">Cell membrane</location>
        <topology evidence="3">Multi-pass membrane protein</topology>
    </subcellularLocation>
</comment>
<comment type="similarity">
    <text evidence="3">Belongs to the CPA3 antiporters (TC 2.A.63) subunit E family.</text>
</comment>
<protein>
    <recommendedName>
        <fullName>Na(+)/H(+) antiporter subunit E1</fullName>
    </recommendedName>
    <alternativeName>
        <fullName>Mnh complex subunit E1</fullName>
    </alternativeName>
</protein>
<sequence>MAVQLVLNFIIAVFWLFVTNSYTTNNFVLGFIFGLVLVYLLHRVLPGRFYVITLYRIIKLVIIFLIELIKANFDVLKIIIKPSIKNEPGFFVYHTDLKKDWQIVLLSNLITLTPGTVVLGVSDDRTKIYIHAIDFSTKEQEVESIKTSLEKIVREVGEI</sequence>
<reference key="1">
    <citation type="journal article" date="2001" name="Lancet">
        <title>Whole genome sequencing of meticillin-resistant Staphylococcus aureus.</title>
        <authorList>
            <person name="Kuroda M."/>
            <person name="Ohta T."/>
            <person name="Uchiyama I."/>
            <person name="Baba T."/>
            <person name="Yuzawa H."/>
            <person name="Kobayashi I."/>
            <person name="Cui L."/>
            <person name="Oguchi A."/>
            <person name="Aoki K."/>
            <person name="Nagai Y."/>
            <person name="Lian J.-Q."/>
            <person name="Ito T."/>
            <person name="Kanamori M."/>
            <person name="Matsumaru H."/>
            <person name="Maruyama A."/>
            <person name="Murakami H."/>
            <person name="Hosoyama A."/>
            <person name="Mizutani-Ui Y."/>
            <person name="Takahashi N.K."/>
            <person name="Sawano T."/>
            <person name="Inoue R."/>
            <person name="Kaito C."/>
            <person name="Sekimizu K."/>
            <person name="Hirakawa H."/>
            <person name="Kuhara S."/>
            <person name="Goto S."/>
            <person name="Yabuzaki J."/>
            <person name="Kanehisa M."/>
            <person name="Yamashita A."/>
            <person name="Oshima K."/>
            <person name="Furuya K."/>
            <person name="Yoshino C."/>
            <person name="Shiba T."/>
            <person name="Hattori M."/>
            <person name="Ogasawara N."/>
            <person name="Hayashi H."/>
            <person name="Hiramatsu K."/>
        </authorList>
    </citation>
    <scope>NUCLEOTIDE SEQUENCE [LARGE SCALE GENOMIC DNA]</scope>
    <source>
        <strain>Mu50 / ATCC 700699</strain>
    </source>
</reference>
<proteinExistence type="inferred from homology"/>
<dbReference type="EMBL" id="BA000017">
    <property type="protein sequence ID" value="BAB57110.1"/>
    <property type="molecule type" value="Genomic_DNA"/>
</dbReference>
<dbReference type="RefSeq" id="WP_000290674.1">
    <property type="nucleotide sequence ID" value="NC_002758.2"/>
</dbReference>
<dbReference type="SMR" id="P60688"/>
<dbReference type="KEGG" id="sav:SAV0948"/>
<dbReference type="HOGENOM" id="CLU_086615_3_2_9"/>
<dbReference type="PhylomeDB" id="P60688"/>
<dbReference type="Proteomes" id="UP000002481">
    <property type="component" value="Chromosome"/>
</dbReference>
<dbReference type="GO" id="GO:0005886">
    <property type="term" value="C:plasma membrane"/>
    <property type="evidence" value="ECO:0007669"/>
    <property type="project" value="UniProtKB-SubCell"/>
</dbReference>
<dbReference type="GO" id="GO:0015297">
    <property type="term" value="F:antiporter activity"/>
    <property type="evidence" value="ECO:0007669"/>
    <property type="project" value="UniProtKB-KW"/>
</dbReference>
<dbReference type="GO" id="GO:0008324">
    <property type="term" value="F:monoatomic cation transmembrane transporter activity"/>
    <property type="evidence" value="ECO:0007669"/>
    <property type="project" value="InterPro"/>
</dbReference>
<dbReference type="GO" id="GO:1902600">
    <property type="term" value="P:proton transmembrane transport"/>
    <property type="evidence" value="ECO:0007669"/>
    <property type="project" value="UniProtKB-KW"/>
</dbReference>
<dbReference type="GO" id="GO:0006814">
    <property type="term" value="P:sodium ion transport"/>
    <property type="evidence" value="ECO:0007669"/>
    <property type="project" value="UniProtKB-KW"/>
</dbReference>
<dbReference type="InterPro" id="IPR004847">
    <property type="entry name" value="Antiport_suE1"/>
</dbReference>
<dbReference type="InterPro" id="IPR002758">
    <property type="entry name" value="Cation_antiport_E"/>
</dbReference>
<dbReference type="NCBIfam" id="TIGR00942">
    <property type="entry name" value="2a6301s05"/>
    <property type="match status" value="1"/>
</dbReference>
<dbReference type="NCBIfam" id="NF009291">
    <property type="entry name" value="PRK12651.1-1"/>
    <property type="match status" value="1"/>
</dbReference>
<dbReference type="PANTHER" id="PTHR34584">
    <property type="entry name" value="NA(+)/H(+) ANTIPORTER SUBUNIT E1"/>
    <property type="match status" value="1"/>
</dbReference>
<dbReference type="PANTHER" id="PTHR34584:SF1">
    <property type="entry name" value="NA(+)_H(+) ANTIPORTER SUBUNIT E1"/>
    <property type="match status" value="1"/>
</dbReference>
<dbReference type="Pfam" id="PF01899">
    <property type="entry name" value="MNHE"/>
    <property type="match status" value="1"/>
</dbReference>
<dbReference type="PIRSF" id="PIRSF019239">
    <property type="entry name" value="MrpE"/>
    <property type="match status" value="1"/>
</dbReference>
<keyword id="KW-0050">Antiport</keyword>
<keyword id="KW-1003">Cell membrane</keyword>
<keyword id="KW-0375">Hydrogen ion transport</keyword>
<keyword id="KW-0406">Ion transport</keyword>
<keyword id="KW-0472">Membrane</keyword>
<keyword id="KW-0915">Sodium</keyword>
<keyword id="KW-0739">Sodium transport</keyword>
<keyword id="KW-0812">Transmembrane</keyword>
<keyword id="KW-1133">Transmembrane helix</keyword>
<keyword id="KW-0813">Transport</keyword>
<feature type="chain" id="PRO_0000217087" description="Na(+)/H(+) antiporter subunit E1">
    <location>
        <begin position="1"/>
        <end position="159"/>
    </location>
</feature>
<feature type="transmembrane region" description="Helical" evidence="2">
    <location>
        <begin position="5"/>
        <end position="22"/>
    </location>
</feature>
<feature type="transmembrane region" description="Helical" evidence="2">
    <location>
        <begin position="27"/>
        <end position="45"/>
    </location>
</feature>
<feature type="transmembrane region" description="Helical" evidence="2">
    <location>
        <begin position="52"/>
        <end position="69"/>
    </location>
</feature>
<feature type="transmembrane region" description="Helical" evidence="2">
    <location>
        <begin position="100"/>
        <end position="122"/>
    </location>
</feature>
<accession>P60688</accession>
<accession>Q9ZNG2</accession>
<gene>
    <name type="primary">mnhE1</name>
    <name type="ordered locus">SAV0948</name>
</gene>
<organism>
    <name type="scientific">Staphylococcus aureus (strain Mu50 / ATCC 700699)</name>
    <dbReference type="NCBI Taxonomy" id="158878"/>
    <lineage>
        <taxon>Bacteria</taxon>
        <taxon>Bacillati</taxon>
        <taxon>Bacillota</taxon>
        <taxon>Bacilli</taxon>
        <taxon>Bacillales</taxon>
        <taxon>Staphylococcaceae</taxon>
        <taxon>Staphylococcus</taxon>
    </lineage>
</organism>
<name>MNHE1_STAAM</name>
<evidence type="ECO:0000250" key="1"/>
<evidence type="ECO:0000255" key="2"/>
<evidence type="ECO:0000305" key="3"/>